<name>HTPX_STRU0</name>
<comment type="cofactor">
    <cofactor evidence="1">
        <name>Zn(2+)</name>
        <dbReference type="ChEBI" id="CHEBI:29105"/>
    </cofactor>
    <text evidence="1">Binds 1 zinc ion per subunit.</text>
</comment>
<comment type="subcellular location">
    <subcellularLocation>
        <location evidence="1">Cell membrane</location>
        <topology evidence="1">Multi-pass membrane protein</topology>
    </subcellularLocation>
</comment>
<comment type="similarity">
    <text evidence="1">Belongs to the peptidase M48B family.</text>
</comment>
<accession>B9DTP5</accession>
<proteinExistence type="inferred from homology"/>
<dbReference type="EC" id="3.4.24.-" evidence="1"/>
<dbReference type="EMBL" id="AM946015">
    <property type="protein sequence ID" value="CAR40982.1"/>
    <property type="molecule type" value="Genomic_DNA"/>
</dbReference>
<dbReference type="RefSeq" id="WP_012657911.1">
    <property type="nucleotide sequence ID" value="NC_012004.1"/>
</dbReference>
<dbReference type="STRING" id="218495.SUB0376"/>
<dbReference type="GeneID" id="93825679"/>
<dbReference type="KEGG" id="sub:SUB0376"/>
<dbReference type="eggNOG" id="COG0501">
    <property type="taxonomic scope" value="Bacteria"/>
</dbReference>
<dbReference type="HOGENOM" id="CLU_042266_2_1_9"/>
<dbReference type="OrthoDB" id="15218at2"/>
<dbReference type="Proteomes" id="UP000000449">
    <property type="component" value="Chromosome"/>
</dbReference>
<dbReference type="GO" id="GO:0005886">
    <property type="term" value="C:plasma membrane"/>
    <property type="evidence" value="ECO:0007669"/>
    <property type="project" value="UniProtKB-SubCell"/>
</dbReference>
<dbReference type="GO" id="GO:0004222">
    <property type="term" value="F:metalloendopeptidase activity"/>
    <property type="evidence" value="ECO:0007669"/>
    <property type="project" value="UniProtKB-UniRule"/>
</dbReference>
<dbReference type="GO" id="GO:0008270">
    <property type="term" value="F:zinc ion binding"/>
    <property type="evidence" value="ECO:0007669"/>
    <property type="project" value="UniProtKB-UniRule"/>
</dbReference>
<dbReference type="GO" id="GO:0006508">
    <property type="term" value="P:proteolysis"/>
    <property type="evidence" value="ECO:0007669"/>
    <property type="project" value="UniProtKB-KW"/>
</dbReference>
<dbReference type="CDD" id="cd07340">
    <property type="entry name" value="M48B_Htpx_like"/>
    <property type="match status" value="1"/>
</dbReference>
<dbReference type="Gene3D" id="3.30.2010.10">
    <property type="entry name" value="Metalloproteases ('zincins'), catalytic domain"/>
    <property type="match status" value="1"/>
</dbReference>
<dbReference type="HAMAP" id="MF_00188">
    <property type="entry name" value="Pept_M48_protease_HtpX"/>
    <property type="match status" value="1"/>
</dbReference>
<dbReference type="InterPro" id="IPR050083">
    <property type="entry name" value="HtpX_protease"/>
</dbReference>
<dbReference type="InterPro" id="IPR022919">
    <property type="entry name" value="Pept_M48_protease_HtpX"/>
</dbReference>
<dbReference type="InterPro" id="IPR001915">
    <property type="entry name" value="Peptidase_M48"/>
</dbReference>
<dbReference type="NCBIfam" id="NF003425">
    <property type="entry name" value="PRK04897.1"/>
    <property type="match status" value="1"/>
</dbReference>
<dbReference type="PANTHER" id="PTHR43221">
    <property type="entry name" value="PROTEASE HTPX"/>
    <property type="match status" value="1"/>
</dbReference>
<dbReference type="PANTHER" id="PTHR43221:SF1">
    <property type="entry name" value="PROTEASE HTPX"/>
    <property type="match status" value="1"/>
</dbReference>
<dbReference type="Pfam" id="PF01435">
    <property type="entry name" value="Peptidase_M48"/>
    <property type="match status" value="1"/>
</dbReference>
<sequence length="297" mass="32817">MLYQQIAQNKRKTIFLILAFFFLLTAIGAAAGYLLVESYQFGIVLALILGSIYAFSMIFQSTNVVMGMNKAREITVDQAPDFFHIVEDMAMVAQIPMPKVYIIDDPSLNAFATGSSPENAAVAATSGLLQVMNREELEGVIGHEISHIRNYDIRISTIAVALASAITLIASMGSRMMWYGGGRQRQNDRDNSSLGIVFLIFSLLSLILAPLIASMVQLAISRQREYLADASSVELTRNPEGMIRALEKLSQSQPMSHPVDDASSALYINEPQKRESLSSLFSTHPPIADRIERLRHM</sequence>
<protein>
    <recommendedName>
        <fullName evidence="1">Protease HtpX homolog</fullName>
        <ecNumber evidence="1">3.4.24.-</ecNumber>
    </recommendedName>
</protein>
<organism>
    <name type="scientific">Streptococcus uberis (strain ATCC BAA-854 / 0140J)</name>
    <dbReference type="NCBI Taxonomy" id="218495"/>
    <lineage>
        <taxon>Bacteria</taxon>
        <taxon>Bacillati</taxon>
        <taxon>Bacillota</taxon>
        <taxon>Bacilli</taxon>
        <taxon>Lactobacillales</taxon>
        <taxon>Streptococcaceae</taxon>
        <taxon>Streptococcus</taxon>
    </lineage>
</organism>
<evidence type="ECO:0000255" key="1">
    <source>
        <dbReference type="HAMAP-Rule" id="MF_00188"/>
    </source>
</evidence>
<feature type="chain" id="PRO_1000192751" description="Protease HtpX homolog">
    <location>
        <begin position="1"/>
        <end position="297"/>
    </location>
</feature>
<feature type="transmembrane region" description="Helical" evidence="1">
    <location>
        <begin position="14"/>
        <end position="34"/>
    </location>
</feature>
<feature type="transmembrane region" description="Helical" evidence="1">
    <location>
        <begin position="39"/>
        <end position="59"/>
    </location>
</feature>
<feature type="transmembrane region" description="Helical" evidence="1">
    <location>
        <begin position="153"/>
        <end position="173"/>
    </location>
</feature>
<feature type="transmembrane region" description="Helical" evidence="1">
    <location>
        <begin position="196"/>
        <end position="216"/>
    </location>
</feature>
<feature type="active site" evidence="1">
    <location>
        <position position="144"/>
    </location>
</feature>
<feature type="binding site" evidence="1">
    <location>
        <position position="143"/>
    </location>
    <ligand>
        <name>Zn(2+)</name>
        <dbReference type="ChEBI" id="CHEBI:29105"/>
        <note>catalytic</note>
    </ligand>
</feature>
<feature type="binding site" evidence="1">
    <location>
        <position position="147"/>
    </location>
    <ligand>
        <name>Zn(2+)</name>
        <dbReference type="ChEBI" id="CHEBI:29105"/>
        <note>catalytic</note>
    </ligand>
</feature>
<feature type="binding site" evidence="1">
    <location>
        <position position="225"/>
    </location>
    <ligand>
        <name>Zn(2+)</name>
        <dbReference type="ChEBI" id="CHEBI:29105"/>
        <note>catalytic</note>
    </ligand>
</feature>
<gene>
    <name evidence="1" type="primary">htpX</name>
    <name type="ordered locus">SUB0376</name>
</gene>
<reference key="1">
    <citation type="journal article" date="2009" name="BMC Genomics">
        <title>Evidence for niche adaptation in the genome of the bovine pathogen Streptococcus uberis.</title>
        <authorList>
            <person name="Ward P.N."/>
            <person name="Holden M.T.G."/>
            <person name="Leigh J.A."/>
            <person name="Lennard N."/>
            <person name="Bignell A."/>
            <person name="Barron A."/>
            <person name="Clark L."/>
            <person name="Quail M.A."/>
            <person name="Woodward J."/>
            <person name="Barrell B.G."/>
            <person name="Egan S.A."/>
            <person name="Field T.R."/>
            <person name="Maskell D."/>
            <person name="Kehoe M."/>
            <person name="Dowson C.G."/>
            <person name="Chanter N."/>
            <person name="Whatmore A.M."/>
            <person name="Bentley S.D."/>
            <person name="Parkhill J."/>
        </authorList>
    </citation>
    <scope>NUCLEOTIDE SEQUENCE [LARGE SCALE GENOMIC DNA]</scope>
    <source>
        <strain>ATCC BAA-854 / 0140J</strain>
    </source>
</reference>
<keyword id="KW-1003">Cell membrane</keyword>
<keyword id="KW-0378">Hydrolase</keyword>
<keyword id="KW-0472">Membrane</keyword>
<keyword id="KW-0479">Metal-binding</keyword>
<keyword id="KW-0482">Metalloprotease</keyword>
<keyword id="KW-0645">Protease</keyword>
<keyword id="KW-1185">Reference proteome</keyword>
<keyword id="KW-0812">Transmembrane</keyword>
<keyword id="KW-1133">Transmembrane helix</keyword>
<keyword id="KW-0862">Zinc</keyword>